<accession>B6YVY6</accession>
<sequence>MENGYKTYRDKVIEYLEAHEKWRSSTINLIASENVTSPSVNRAVSSGFMHKYAEGWPRQRYYQGCKYVDEVELIGVDLFCKLFGSDFADLRPISGTNANQAVFFGLTQPGDKAIVLHTSHGGHISHMPFGAAGMRGLEVHTWPFDNEEFNIDVDKAAQLIRELEPRIVVFGGSLFPFPHPVKELAPVAKEVGAYVMYDAAHVLGLIAGKQFQNPLREGVDIMTASTHKTFPGPQGGIILYKNFGDDVAKLQWAIFPGVLSNHHLHHMAGKVITAAEMLEFGERYAAQIVKNAKALAEALAEEGFKVIGEDKDYTESHQVIVDVSDLHEAAGGWAAPLLEEAGIILNKNLLPWDPLEKVNTPSGLRIGVQEMTRVGMLEDNMKDIAVFMRRVLIDKEDPKKVEKEVAEYRKEYQKVYYSFDHGLPMKE</sequence>
<dbReference type="EC" id="2.1.2.-" evidence="1"/>
<dbReference type="EMBL" id="CP000855">
    <property type="protein sequence ID" value="ACJ16309.1"/>
    <property type="molecule type" value="Genomic_DNA"/>
</dbReference>
<dbReference type="RefSeq" id="WP_012571781.1">
    <property type="nucleotide sequence ID" value="NC_011529.1"/>
</dbReference>
<dbReference type="SMR" id="B6YVY6"/>
<dbReference type="STRING" id="523850.TON_0821"/>
<dbReference type="GeneID" id="7017124"/>
<dbReference type="KEGG" id="ton:TON_0821"/>
<dbReference type="PATRIC" id="fig|523850.10.peg.828"/>
<dbReference type="eggNOG" id="arCOG00070">
    <property type="taxonomic scope" value="Archaea"/>
</dbReference>
<dbReference type="HOGENOM" id="CLU_022477_2_1_2"/>
<dbReference type="OrthoDB" id="5821at2157"/>
<dbReference type="UniPathway" id="UPA00288">
    <property type="reaction ID" value="UER01023"/>
</dbReference>
<dbReference type="Proteomes" id="UP000002727">
    <property type="component" value="Chromosome"/>
</dbReference>
<dbReference type="GO" id="GO:0005737">
    <property type="term" value="C:cytoplasm"/>
    <property type="evidence" value="ECO:0007669"/>
    <property type="project" value="UniProtKB-SubCell"/>
</dbReference>
<dbReference type="GO" id="GO:0004372">
    <property type="term" value="F:glycine hydroxymethyltransferase activity"/>
    <property type="evidence" value="ECO:0007669"/>
    <property type="project" value="UniProtKB-UniRule"/>
</dbReference>
<dbReference type="GO" id="GO:0030170">
    <property type="term" value="F:pyridoxal phosphate binding"/>
    <property type="evidence" value="ECO:0007669"/>
    <property type="project" value="UniProtKB-UniRule"/>
</dbReference>
<dbReference type="GO" id="GO:0019264">
    <property type="term" value="P:glycine biosynthetic process from serine"/>
    <property type="evidence" value="ECO:0007669"/>
    <property type="project" value="UniProtKB-UniRule"/>
</dbReference>
<dbReference type="GO" id="GO:0035999">
    <property type="term" value="P:tetrahydrofolate interconversion"/>
    <property type="evidence" value="ECO:0007669"/>
    <property type="project" value="InterPro"/>
</dbReference>
<dbReference type="CDD" id="cd00378">
    <property type="entry name" value="SHMT"/>
    <property type="match status" value="1"/>
</dbReference>
<dbReference type="FunFam" id="3.40.640.10:FF:000101">
    <property type="entry name" value="Serine hydroxymethyltransferase"/>
    <property type="match status" value="1"/>
</dbReference>
<dbReference type="FunFam" id="3.90.1150.10:FF:000114">
    <property type="entry name" value="Serine hydroxymethyltransferase"/>
    <property type="match status" value="1"/>
</dbReference>
<dbReference type="Gene3D" id="3.90.1150.10">
    <property type="entry name" value="Aspartate Aminotransferase, domain 1"/>
    <property type="match status" value="1"/>
</dbReference>
<dbReference type="Gene3D" id="3.40.640.10">
    <property type="entry name" value="Type I PLP-dependent aspartate aminotransferase-like (Major domain)"/>
    <property type="match status" value="1"/>
</dbReference>
<dbReference type="HAMAP" id="MF_00051">
    <property type="entry name" value="SHMT"/>
    <property type="match status" value="1"/>
</dbReference>
<dbReference type="InterPro" id="IPR015424">
    <property type="entry name" value="PyrdxlP-dep_Trfase"/>
</dbReference>
<dbReference type="InterPro" id="IPR015421">
    <property type="entry name" value="PyrdxlP-dep_Trfase_major"/>
</dbReference>
<dbReference type="InterPro" id="IPR015422">
    <property type="entry name" value="PyrdxlP-dep_Trfase_small"/>
</dbReference>
<dbReference type="InterPro" id="IPR001085">
    <property type="entry name" value="Ser_HO-MeTrfase"/>
</dbReference>
<dbReference type="InterPro" id="IPR049943">
    <property type="entry name" value="Ser_HO-MeTrfase-like"/>
</dbReference>
<dbReference type="InterPro" id="IPR019798">
    <property type="entry name" value="Ser_HO-MeTrfase_PLP_BS"/>
</dbReference>
<dbReference type="InterPro" id="IPR039429">
    <property type="entry name" value="SHMT-like_dom"/>
</dbReference>
<dbReference type="NCBIfam" id="NF000586">
    <property type="entry name" value="PRK00011.1"/>
    <property type="match status" value="1"/>
</dbReference>
<dbReference type="PANTHER" id="PTHR11680">
    <property type="entry name" value="SERINE HYDROXYMETHYLTRANSFERASE"/>
    <property type="match status" value="1"/>
</dbReference>
<dbReference type="PANTHER" id="PTHR11680:SF35">
    <property type="entry name" value="SERINE HYDROXYMETHYLTRANSFERASE 1"/>
    <property type="match status" value="1"/>
</dbReference>
<dbReference type="Pfam" id="PF00464">
    <property type="entry name" value="SHMT"/>
    <property type="match status" value="1"/>
</dbReference>
<dbReference type="PIRSF" id="PIRSF000412">
    <property type="entry name" value="SHMT"/>
    <property type="match status" value="1"/>
</dbReference>
<dbReference type="SUPFAM" id="SSF53383">
    <property type="entry name" value="PLP-dependent transferases"/>
    <property type="match status" value="1"/>
</dbReference>
<dbReference type="PROSITE" id="PS00096">
    <property type="entry name" value="SHMT"/>
    <property type="match status" value="1"/>
</dbReference>
<proteinExistence type="inferred from homology"/>
<evidence type="ECO:0000255" key="1">
    <source>
        <dbReference type="HAMAP-Rule" id="MF_00051"/>
    </source>
</evidence>
<protein>
    <recommendedName>
        <fullName evidence="1">Serine hydroxymethyltransferase</fullName>
        <shortName evidence="1">SHMT</shortName>
        <shortName evidence="1">Serine methylase</shortName>
        <ecNumber evidence="1">2.1.2.-</ecNumber>
    </recommendedName>
</protein>
<reference key="1">
    <citation type="journal article" date="2008" name="J. Bacteriol.">
        <title>The complete genome sequence of Thermococcus onnurineus NA1 reveals a mixed heterotrophic and carboxydotrophic metabolism.</title>
        <authorList>
            <person name="Lee H.S."/>
            <person name="Kang S.G."/>
            <person name="Bae S.S."/>
            <person name="Lim J.K."/>
            <person name="Cho Y."/>
            <person name="Kim Y.J."/>
            <person name="Jeon J.H."/>
            <person name="Cha S.-S."/>
            <person name="Kwon K.K."/>
            <person name="Kim H.-T."/>
            <person name="Park C.-J."/>
            <person name="Lee H.-W."/>
            <person name="Kim S.I."/>
            <person name="Chun J."/>
            <person name="Colwell R.R."/>
            <person name="Kim S.-J."/>
            <person name="Lee J.-H."/>
        </authorList>
    </citation>
    <scope>NUCLEOTIDE SEQUENCE [LARGE SCALE GENOMIC DNA]</scope>
    <source>
        <strain>NA1</strain>
    </source>
</reference>
<name>GLYA_THEON</name>
<organism>
    <name type="scientific">Thermococcus onnurineus (strain NA1)</name>
    <dbReference type="NCBI Taxonomy" id="523850"/>
    <lineage>
        <taxon>Archaea</taxon>
        <taxon>Methanobacteriati</taxon>
        <taxon>Methanobacteriota</taxon>
        <taxon>Thermococci</taxon>
        <taxon>Thermococcales</taxon>
        <taxon>Thermococcaceae</taxon>
        <taxon>Thermococcus</taxon>
    </lineage>
</organism>
<gene>
    <name evidence="1" type="primary">glyA</name>
    <name type="ordered locus">TON_0821</name>
</gene>
<comment type="function">
    <text evidence="1">Catalyzes the reversible interconversion of serine and glycine with a modified folate serving as the one-carbon carrier. Also exhibits a pteridine-independent aldolase activity toward beta-hydroxyamino acids, producing glycine and aldehydes, via a retro-aldol mechanism.</text>
</comment>
<comment type="cofactor">
    <cofactor evidence="1">
        <name>pyridoxal 5'-phosphate</name>
        <dbReference type="ChEBI" id="CHEBI:597326"/>
    </cofactor>
</comment>
<comment type="pathway">
    <text evidence="1">Amino-acid biosynthesis; glycine biosynthesis; glycine from L-serine: step 1/1.</text>
</comment>
<comment type="subunit">
    <text evidence="1">Homodimer.</text>
</comment>
<comment type="subcellular location">
    <subcellularLocation>
        <location evidence="1">Cytoplasm</location>
    </subcellularLocation>
</comment>
<comment type="similarity">
    <text evidence="1">Belongs to the SHMT family.</text>
</comment>
<keyword id="KW-0028">Amino-acid biosynthesis</keyword>
<keyword id="KW-0963">Cytoplasm</keyword>
<keyword id="KW-0554">One-carbon metabolism</keyword>
<keyword id="KW-0663">Pyridoxal phosphate</keyword>
<keyword id="KW-0808">Transferase</keyword>
<feature type="chain" id="PRO_0000369977" description="Serine hydroxymethyltransferase">
    <location>
        <begin position="1"/>
        <end position="427"/>
    </location>
</feature>
<feature type="binding site" evidence="1">
    <location>
        <begin position="122"/>
        <end position="124"/>
    </location>
    <ligand>
        <name>(6S)-5,6,7,8-tetrahydrofolate</name>
        <dbReference type="ChEBI" id="CHEBI:57453"/>
    </ligand>
</feature>
<feature type="site" description="Plays an important role in substrate specificity" evidence="1">
    <location>
        <position position="227"/>
    </location>
</feature>
<feature type="modified residue" description="N6-(pyridoxal phosphate)lysine" evidence="1">
    <location>
        <position position="228"/>
    </location>
</feature>